<evidence type="ECO:0000255" key="1">
    <source>
        <dbReference type="HAMAP-Rule" id="MF_01201"/>
    </source>
</evidence>
<organism>
    <name type="scientific">Clostridium kluyveri (strain ATCC 8527 / DSM 555 / NBRC 12016 / NCIMB 10680 / K1)</name>
    <dbReference type="NCBI Taxonomy" id="431943"/>
    <lineage>
        <taxon>Bacteria</taxon>
        <taxon>Bacillati</taxon>
        <taxon>Bacillota</taxon>
        <taxon>Clostridia</taxon>
        <taxon>Eubacteriales</taxon>
        <taxon>Clostridiaceae</taxon>
        <taxon>Clostridium</taxon>
    </lineage>
</organism>
<proteinExistence type="inferred from homology"/>
<reference key="1">
    <citation type="journal article" date="2008" name="Proc. Natl. Acad. Sci. U.S.A.">
        <title>The genome of Clostridium kluyveri, a strict anaerobe with unique metabolic features.</title>
        <authorList>
            <person name="Seedorf H."/>
            <person name="Fricke W.F."/>
            <person name="Veith B."/>
            <person name="Brueggemann H."/>
            <person name="Liesegang H."/>
            <person name="Strittmatter A."/>
            <person name="Miethke M."/>
            <person name="Buckel W."/>
            <person name="Hinderberger J."/>
            <person name="Li F."/>
            <person name="Hagemeier C."/>
            <person name="Thauer R.K."/>
            <person name="Gottschalk G."/>
        </authorList>
    </citation>
    <scope>NUCLEOTIDE SEQUENCE [LARGE SCALE GENOMIC DNA]</scope>
    <source>
        <strain>ATCC 8527 / DSM 555 / NBRC 12016 / NCIMB 10680 / K1</strain>
    </source>
</reference>
<gene>
    <name type="primary">alr</name>
    <name type="ordered locus">CKL_3581</name>
</gene>
<comment type="function">
    <text evidence="1">Catalyzes the interconversion of L-alanine and D-alanine. May also act on other amino acids.</text>
</comment>
<comment type="catalytic activity">
    <reaction evidence="1">
        <text>L-alanine = D-alanine</text>
        <dbReference type="Rhea" id="RHEA:20249"/>
        <dbReference type="ChEBI" id="CHEBI:57416"/>
        <dbReference type="ChEBI" id="CHEBI:57972"/>
        <dbReference type="EC" id="5.1.1.1"/>
    </reaction>
</comment>
<comment type="cofactor">
    <cofactor evidence="1">
        <name>pyridoxal 5'-phosphate</name>
        <dbReference type="ChEBI" id="CHEBI:597326"/>
    </cofactor>
</comment>
<comment type="pathway">
    <text evidence="1">Amino-acid biosynthesis; D-alanine biosynthesis; D-alanine from L-alanine: step 1/1.</text>
</comment>
<comment type="similarity">
    <text evidence="1">Belongs to the alanine racemase family.</text>
</comment>
<dbReference type="EC" id="5.1.1.1" evidence="1"/>
<dbReference type="EMBL" id="CP000673">
    <property type="protein sequence ID" value="EDK35572.1"/>
    <property type="molecule type" value="Genomic_DNA"/>
</dbReference>
<dbReference type="RefSeq" id="WP_012103904.1">
    <property type="nucleotide sequence ID" value="NC_009706.1"/>
</dbReference>
<dbReference type="SMR" id="A5N376"/>
<dbReference type="STRING" id="431943.CKL_3581"/>
<dbReference type="KEGG" id="ckl:CKL_3581"/>
<dbReference type="eggNOG" id="COG0787">
    <property type="taxonomic scope" value="Bacteria"/>
</dbReference>
<dbReference type="HOGENOM" id="CLU_028393_2_2_9"/>
<dbReference type="UniPathway" id="UPA00042">
    <property type="reaction ID" value="UER00497"/>
</dbReference>
<dbReference type="Proteomes" id="UP000002411">
    <property type="component" value="Chromosome"/>
</dbReference>
<dbReference type="GO" id="GO:0005829">
    <property type="term" value="C:cytosol"/>
    <property type="evidence" value="ECO:0007669"/>
    <property type="project" value="TreeGrafter"/>
</dbReference>
<dbReference type="GO" id="GO:0008784">
    <property type="term" value="F:alanine racemase activity"/>
    <property type="evidence" value="ECO:0007669"/>
    <property type="project" value="UniProtKB-UniRule"/>
</dbReference>
<dbReference type="GO" id="GO:0030170">
    <property type="term" value="F:pyridoxal phosphate binding"/>
    <property type="evidence" value="ECO:0007669"/>
    <property type="project" value="UniProtKB-UniRule"/>
</dbReference>
<dbReference type="GO" id="GO:0030632">
    <property type="term" value="P:D-alanine biosynthetic process"/>
    <property type="evidence" value="ECO:0007669"/>
    <property type="project" value="UniProtKB-UniRule"/>
</dbReference>
<dbReference type="GO" id="GO:0009252">
    <property type="term" value="P:peptidoglycan biosynthetic process"/>
    <property type="evidence" value="ECO:0007669"/>
    <property type="project" value="TreeGrafter"/>
</dbReference>
<dbReference type="CDD" id="cd00430">
    <property type="entry name" value="PLPDE_III_AR"/>
    <property type="match status" value="1"/>
</dbReference>
<dbReference type="FunFam" id="2.40.37.10:FF:000006">
    <property type="entry name" value="Alanine racemase"/>
    <property type="match status" value="1"/>
</dbReference>
<dbReference type="FunFam" id="3.20.20.10:FF:000002">
    <property type="entry name" value="Alanine racemase"/>
    <property type="match status" value="1"/>
</dbReference>
<dbReference type="Gene3D" id="3.20.20.10">
    <property type="entry name" value="Alanine racemase"/>
    <property type="match status" value="1"/>
</dbReference>
<dbReference type="Gene3D" id="2.40.37.10">
    <property type="entry name" value="Lyase, Ornithine Decarboxylase, Chain A, domain 1"/>
    <property type="match status" value="1"/>
</dbReference>
<dbReference type="HAMAP" id="MF_01201">
    <property type="entry name" value="Ala_racemase"/>
    <property type="match status" value="1"/>
</dbReference>
<dbReference type="InterPro" id="IPR000821">
    <property type="entry name" value="Ala_racemase"/>
</dbReference>
<dbReference type="InterPro" id="IPR009006">
    <property type="entry name" value="Ala_racemase/Decarboxylase_C"/>
</dbReference>
<dbReference type="InterPro" id="IPR011079">
    <property type="entry name" value="Ala_racemase_C"/>
</dbReference>
<dbReference type="InterPro" id="IPR001608">
    <property type="entry name" value="Ala_racemase_N"/>
</dbReference>
<dbReference type="InterPro" id="IPR020622">
    <property type="entry name" value="Ala_racemase_pyridoxalP-BS"/>
</dbReference>
<dbReference type="InterPro" id="IPR029066">
    <property type="entry name" value="PLP-binding_barrel"/>
</dbReference>
<dbReference type="NCBIfam" id="TIGR00492">
    <property type="entry name" value="alr"/>
    <property type="match status" value="1"/>
</dbReference>
<dbReference type="PANTHER" id="PTHR30511">
    <property type="entry name" value="ALANINE RACEMASE"/>
    <property type="match status" value="1"/>
</dbReference>
<dbReference type="PANTHER" id="PTHR30511:SF0">
    <property type="entry name" value="ALANINE RACEMASE, CATABOLIC-RELATED"/>
    <property type="match status" value="1"/>
</dbReference>
<dbReference type="Pfam" id="PF00842">
    <property type="entry name" value="Ala_racemase_C"/>
    <property type="match status" value="1"/>
</dbReference>
<dbReference type="Pfam" id="PF01168">
    <property type="entry name" value="Ala_racemase_N"/>
    <property type="match status" value="1"/>
</dbReference>
<dbReference type="PRINTS" id="PR00992">
    <property type="entry name" value="ALARACEMASE"/>
</dbReference>
<dbReference type="SMART" id="SM01005">
    <property type="entry name" value="Ala_racemase_C"/>
    <property type="match status" value="1"/>
</dbReference>
<dbReference type="SUPFAM" id="SSF50621">
    <property type="entry name" value="Alanine racemase C-terminal domain-like"/>
    <property type="match status" value="1"/>
</dbReference>
<dbReference type="SUPFAM" id="SSF51419">
    <property type="entry name" value="PLP-binding barrel"/>
    <property type="match status" value="1"/>
</dbReference>
<dbReference type="PROSITE" id="PS00395">
    <property type="entry name" value="ALANINE_RACEMASE"/>
    <property type="match status" value="1"/>
</dbReference>
<keyword id="KW-0413">Isomerase</keyword>
<keyword id="KW-0663">Pyridoxal phosphate</keyword>
<keyword id="KW-1185">Reference proteome</keyword>
<accession>A5N376</accession>
<sequence>MFQKYRPVWEEINLDNLVYNIGQIKSKIGNKELIGVIKADAYGHGAVEIAKVLLENGVSRLAVAILDEAIELRKNKIKVPIMVLGIIPHAFLDEIMNYDIEPIVPSYSYASKLSKLAESKDKKIKVHIALDTGMGRIGFSIDPNSVEEIGKISKLPNIEIQSLFSHFSTADETDKAYSCEQFKKYKLLYEELVKKNVKINMRTISNSAAIMELPDTYCDLVRPGIIMYGYYPSTEVDKNNLSIKPIMTLKANVVYVKVLESGSYIGYGRKFKCNRKSVIATLPLGYADGYTRRLFGKAKVIINGKFAPVVGNICMDQCMVDVTDVGEVNIGDEVVLIGEKDGLKFNADDIAEITGTISYEVLCMIGRRVPKLYIKGGEVVKIKNYVISSDS</sequence>
<protein>
    <recommendedName>
        <fullName evidence="1">Alanine racemase</fullName>
        <ecNumber evidence="1">5.1.1.1</ecNumber>
    </recommendedName>
</protein>
<name>ALR_CLOK5</name>
<feature type="chain" id="PRO_1000085499" description="Alanine racemase">
    <location>
        <begin position="1"/>
        <end position="391"/>
    </location>
</feature>
<feature type="active site" description="Proton acceptor; specific for D-alanine" evidence="1">
    <location>
        <position position="38"/>
    </location>
</feature>
<feature type="active site" description="Proton acceptor; specific for L-alanine" evidence="1">
    <location>
        <position position="267"/>
    </location>
</feature>
<feature type="binding site" evidence="1">
    <location>
        <position position="136"/>
    </location>
    <ligand>
        <name>substrate</name>
    </ligand>
</feature>
<feature type="binding site" evidence="1">
    <location>
        <position position="315"/>
    </location>
    <ligand>
        <name>substrate</name>
    </ligand>
</feature>
<feature type="modified residue" description="N6-(pyridoxal phosphate)lysine" evidence="1">
    <location>
        <position position="38"/>
    </location>
</feature>